<accession>A5UAQ6</accession>
<feature type="chain" id="PRO_0000329671" description="Polyribonucleotide nucleotidyltransferase">
    <location>
        <begin position="1"/>
        <end position="709"/>
    </location>
</feature>
<feature type="domain" description="KH" evidence="1">
    <location>
        <begin position="552"/>
        <end position="611"/>
    </location>
</feature>
<feature type="domain" description="S1 motif" evidence="1">
    <location>
        <begin position="621"/>
        <end position="689"/>
    </location>
</feature>
<feature type="binding site" evidence="1">
    <location>
        <position position="485"/>
    </location>
    <ligand>
        <name>Mg(2+)</name>
        <dbReference type="ChEBI" id="CHEBI:18420"/>
    </ligand>
</feature>
<feature type="binding site" evidence="1">
    <location>
        <position position="491"/>
    </location>
    <ligand>
        <name>Mg(2+)</name>
        <dbReference type="ChEBI" id="CHEBI:18420"/>
    </ligand>
</feature>
<organism>
    <name type="scientific">Haemophilus influenzae (strain PittEE)</name>
    <dbReference type="NCBI Taxonomy" id="374930"/>
    <lineage>
        <taxon>Bacteria</taxon>
        <taxon>Pseudomonadati</taxon>
        <taxon>Pseudomonadota</taxon>
        <taxon>Gammaproteobacteria</taxon>
        <taxon>Pasteurellales</taxon>
        <taxon>Pasteurellaceae</taxon>
        <taxon>Haemophilus</taxon>
    </lineage>
</organism>
<comment type="function">
    <text evidence="1">Involved in mRNA degradation. Catalyzes the phosphorolysis of single-stranded polyribonucleotides processively in the 3'- to 5'-direction.</text>
</comment>
<comment type="catalytic activity">
    <reaction evidence="1">
        <text>RNA(n+1) + phosphate = RNA(n) + a ribonucleoside 5'-diphosphate</text>
        <dbReference type="Rhea" id="RHEA:22096"/>
        <dbReference type="Rhea" id="RHEA-COMP:14527"/>
        <dbReference type="Rhea" id="RHEA-COMP:17342"/>
        <dbReference type="ChEBI" id="CHEBI:43474"/>
        <dbReference type="ChEBI" id="CHEBI:57930"/>
        <dbReference type="ChEBI" id="CHEBI:140395"/>
        <dbReference type="EC" id="2.7.7.8"/>
    </reaction>
</comment>
<comment type="cofactor">
    <cofactor evidence="1">
        <name>Mg(2+)</name>
        <dbReference type="ChEBI" id="CHEBI:18420"/>
    </cofactor>
</comment>
<comment type="subunit">
    <text evidence="1">Component of the RNA degradosome, which is a multiprotein complex involved in RNA processing and mRNA degradation.</text>
</comment>
<comment type="subcellular location">
    <subcellularLocation>
        <location evidence="1">Cytoplasm</location>
    </subcellularLocation>
</comment>
<comment type="similarity">
    <text evidence="1">Belongs to the polyribonucleotide nucleotidyltransferase family.</text>
</comment>
<keyword id="KW-0963">Cytoplasm</keyword>
<keyword id="KW-0460">Magnesium</keyword>
<keyword id="KW-0479">Metal-binding</keyword>
<keyword id="KW-0548">Nucleotidyltransferase</keyword>
<keyword id="KW-0694">RNA-binding</keyword>
<keyword id="KW-0808">Transferase</keyword>
<evidence type="ECO:0000255" key="1">
    <source>
        <dbReference type="HAMAP-Rule" id="MF_01595"/>
    </source>
</evidence>
<gene>
    <name evidence="1" type="primary">pnp</name>
    <name type="ordered locus">CGSHiEE_01930</name>
</gene>
<name>PNP_HAEIE</name>
<reference key="1">
    <citation type="journal article" date="2007" name="Genome Biol.">
        <title>Characterization and modeling of the Haemophilus influenzae core and supragenomes based on the complete genomic sequences of Rd and 12 clinical nontypeable strains.</title>
        <authorList>
            <person name="Hogg J.S."/>
            <person name="Hu F.Z."/>
            <person name="Janto B."/>
            <person name="Boissy R."/>
            <person name="Hayes J."/>
            <person name="Keefe R."/>
            <person name="Post J.C."/>
            <person name="Ehrlich G.D."/>
        </authorList>
    </citation>
    <scope>NUCLEOTIDE SEQUENCE [LARGE SCALE GENOMIC DNA]</scope>
    <source>
        <strain>PittEE</strain>
    </source>
</reference>
<protein>
    <recommendedName>
        <fullName evidence="1">Polyribonucleotide nucleotidyltransferase</fullName>
        <ecNumber evidence="1">2.7.7.8</ecNumber>
    </recommendedName>
    <alternativeName>
        <fullName evidence="1">Polynucleotide phosphorylase</fullName>
        <shortName evidence="1">PNPase</shortName>
    </alternativeName>
</protein>
<proteinExistence type="inferred from homology"/>
<sequence length="709" mass="77007">MNPIVKQFKYGQHTVTLETGAIARQATAAVMASMDDTTVFVTVVAKKDVKEGQDFFPLTVNYQERTYAAGKIPGGFFKREGRPSEGETLIARLIDRPIRPLFPEGFFNEIQVVATVVSVNPQISPDLVAMIGASAALTLSGVPFNGPIGAARVGFIDNQFVLNPTMAEQKQSRLDLVVAGTDKAVLMVESEADVLTEEQMLASVVFGHQQQQVVIEAIKEFAKEAGKPRWDWVAPQPNTDLINKVKAIAEARLGDAYRITEKQLRYEQIDAIKADVIAQITAEDEEISEGKIVDIFTALESQIVRGRIIAGEPRIDGRTVDTVRALDICTGVLPRTHGSAIFTRGETQALAVATLGTERDAQIIDELTGERQDHFLFHYNFPPYSVGETGMIGSPKRREIGHGRLAKRGVAAVMPSLAEFPYVVRVVSEITESNGSSSMASVCGASLALMDAGVPIKAAVAGIAMGLVKEEEKFVVLSDILGDEDHLGDMDFKVAGTREGVTALQMDIKIEGITPEIMQIALNQAKSARMHILGVMEQAIPAPRADISDYAPRIYTMKIDPKKIKDVIGKGGATIRSLTEETGTSIDIDDDGTVKIAAVDSNAAKNVMGRIEEIVAEVEAGAIYKGKVTRLADFGAFVAIVGNKEGLVHISQIAEERVEKVSDYLQVGQEVNVKVVEIDRQGRIRLTMKDLAPKQETEINQEDPVEEQE</sequence>
<dbReference type="EC" id="2.7.7.8" evidence="1"/>
<dbReference type="EMBL" id="CP000671">
    <property type="protein sequence ID" value="ABQ97857.1"/>
    <property type="molecule type" value="Genomic_DNA"/>
</dbReference>
<dbReference type="SMR" id="A5UAQ6"/>
<dbReference type="KEGG" id="hip:CGSHiEE_01930"/>
<dbReference type="HOGENOM" id="CLU_004217_2_2_6"/>
<dbReference type="GO" id="GO:0005829">
    <property type="term" value="C:cytosol"/>
    <property type="evidence" value="ECO:0007669"/>
    <property type="project" value="TreeGrafter"/>
</dbReference>
<dbReference type="GO" id="GO:0000175">
    <property type="term" value="F:3'-5'-RNA exonuclease activity"/>
    <property type="evidence" value="ECO:0007669"/>
    <property type="project" value="TreeGrafter"/>
</dbReference>
<dbReference type="GO" id="GO:0000287">
    <property type="term" value="F:magnesium ion binding"/>
    <property type="evidence" value="ECO:0007669"/>
    <property type="project" value="UniProtKB-UniRule"/>
</dbReference>
<dbReference type="GO" id="GO:0004654">
    <property type="term" value="F:polyribonucleotide nucleotidyltransferase activity"/>
    <property type="evidence" value="ECO:0007669"/>
    <property type="project" value="UniProtKB-UniRule"/>
</dbReference>
<dbReference type="GO" id="GO:0003723">
    <property type="term" value="F:RNA binding"/>
    <property type="evidence" value="ECO:0007669"/>
    <property type="project" value="UniProtKB-UniRule"/>
</dbReference>
<dbReference type="GO" id="GO:0006402">
    <property type="term" value="P:mRNA catabolic process"/>
    <property type="evidence" value="ECO:0007669"/>
    <property type="project" value="UniProtKB-UniRule"/>
</dbReference>
<dbReference type="GO" id="GO:0006396">
    <property type="term" value="P:RNA processing"/>
    <property type="evidence" value="ECO:0007669"/>
    <property type="project" value="InterPro"/>
</dbReference>
<dbReference type="CDD" id="cd02393">
    <property type="entry name" value="KH-I_PNPase"/>
    <property type="match status" value="1"/>
</dbReference>
<dbReference type="CDD" id="cd11363">
    <property type="entry name" value="RNase_PH_PNPase_1"/>
    <property type="match status" value="1"/>
</dbReference>
<dbReference type="CDD" id="cd11364">
    <property type="entry name" value="RNase_PH_PNPase_2"/>
    <property type="match status" value="1"/>
</dbReference>
<dbReference type="CDD" id="cd04472">
    <property type="entry name" value="S1_PNPase"/>
    <property type="match status" value="1"/>
</dbReference>
<dbReference type="FunFam" id="2.40.50.140:FF:000023">
    <property type="entry name" value="Polyribonucleotide nucleotidyltransferase"/>
    <property type="match status" value="1"/>
</dbReference>
<dbReference type="FunFam" id="3.30.1370.10:FF:000001">
    <property type="entry name" value="Polyribonucleotide nucleotidyltransferase"/>
    <property type="match status" value="1"/>
</dbReference>
<dbReference type="FunFam" id="3.30.230.70:FF:000001">
    <property type="entry name" value="Polyribonucleotide nucleotidyltransferase"/>
    <property type="match status" value="1"/>
</dbReference>
<dbReference type="FunFam" id="3.30.230.70:FF:000002">
    <property type="entry name" value="Polyribonucleotide nucleotidyltransferase"/>
    <property type="match status" value="1"/>
</dbReference>
<dbReference type="Gene3D" id="3.30.230.70">
    <property type="entry name" value="GHMP Kinase, N-terminal domain"/>
    <property type="match status" value="2"/>
</dbReference>
<dbReference type="Gene3D" id="3.30.1370.10">
    <property type="entry name" value="K Homology domain, type 1"/>
    <property type="match status" value="1"/>
</dbReference>
<dbReference type="Gene3D" id="2.40.50.140">
    <property type="entry name" value="Nucleic acid-binding proteins"/>
    <property type="match status" value="1"/>
</dbReference>
<dbReference type="HAMAP" id="MF_01595">
    <property type="entry name" value="PNPase"/>
    <property type="match status" value="1"/>
</dbReference>
<dbReference type="InterPro" id="IPR001247">
    <property type="entry name" value="ExoRNase_PH_dom1"/>
</dbReference>
<dbReference type="InterPro" id="IPR015847">
    <property type="entry name" value="ExoRNase_PH_dom2"/>
</dbReference>
<dbReference type="InterPro" id="IPR036345">
    <property type="entry name" value="ExoRNase_PH_dom2_sf"/>
</dbReference>
<dbReference type="InterPro" id="IPR004087">
    <property type="entry name" value="KH_dom"/>
</dbReference>
<dbReference type="InterPro" id="IPR004088">
    <property type="entry name" value="KH_dom_type_1"/>
</dbReference>
<dbReference type="InterPro" id="IPR036612">
    <property type="entry name" value="KH_dom_type_1_sf"/>
</dbReference>
<dbReference type="InterPro" id="IPR012340">
    <property type="entry name" value="NA-bd_OB-fold"/>
</dbReference>
<dbReference type="InterPro" id="IPR012162">
    <property type="entry name" value="PNPase"/>
</dbReference>
<dbReference type="InterPro" id="IPR027408">
    <property type="entry name" value="PNPase/RNase_PH_dom_sf"/>
</dbReference>
<dbReference type="InterPro" id="IPR015848">
    <property type="entry name" value="PNPase_PH_RNA-bd_bac/org-type"/>
</dbReference>
<dbReference type="InterPro" id="IPR020568">
    <property type="entry name" value="Ribosomal_Su5_D2-typ_SF"/>
</dbReference>
<dbReference type="InterPro" id="IPR003029">
    <property type="entry name" value="S1_domain"/>
</dbReference>
<dbReference type="NCBIfam" id="TIGR03591">
    <property type="entry name" value="polynuc_phos"/>
    <property type="match status" value="1"/>
</dbReference>
<dbReference type="NCBIfam" id="NF008805">
    <property type="entry name" value="PRK11824.1"/>
    <property type="match status" value="1"/>
</dbReference>
<dbReference type="PANTHER" id="PTHR11252">
    <property type="entry name" value="POLYRIBONUCLEOTIDE NUCLEOTIDYLTRANSFERASE"/>
    <property type="match status" value="1"/>
</dbReference>
<dbReference type="PANTHER" id="PTHR11252:SF0">
    <property type="entry name" value="POLYRIBONUCLEOTIDE NUCLEOTIDYLTRANSFERASE 1, MITOCHONDRIAL"/>
    <property type="match status" value="1"/>
</dbReference>
<dbReference type="Pfam" id="PF00013">
    <property type="entry name" value="KH_1"/>
    <property type="match status" value="1"/>
</dbReference>
<dbReference type="Pfam" id="PF03726">
    <property type="entry name" value="PNPase"/>
    <property type="match status" value="1"/>
</dbReference>
<dbReference type="Pfam" id="PF01138">
    <property type="entry name" value="RNase_PH"/>
    <property type="match status" value="2"/>
</dbReference>
<dbReference type="Pfam" id="PF03725">
    <property type="entry name" value="RNase_PH_C"/>
    <property type="match status" value="2"/>
</dbReference>
<dbReference type="Pfam" id="PF00575">
    <property type="entry name" value="S1"/>
    <property type="match status" value="1"/>
</dbReference>
<dbReference type="PIRSF" id="PIRSF005499">
    <property type="entry name" value="PNPase"/>
    <property type="match status" value="1"/>
</dbReference>
<dbReference type="SMART" id="SM00322">
    <property type="entry name" value="KH"/>
    <property type="match status" value="1"/>
</dbReference>
<dbReference type="SMART" id="SM00316">
    <property type="entry name" value="S1"/>
    <property type="match status" value="1"/>
</dbReference>
<dbReference type="SUPFAM" id="SSF54791">
    <property type="entry name" value="Eukaryotic type KH-domain (KH-domain type I)"/>
    <property type="match status" value="1"/>
</dbReference>
<dbReference type="SUPFAM" id="SSF50249">
    <property type="entry name" value="Nucleic acid-binding proteins"/>
    <property type="match status" value="1"/>
</dbReference>
<dbReference type="SUPFAM" id="SSF55666">
    <property type="entry name" value="Ribonuclease PH domain 2-like"/>
    <property type="match status" value="2"/>
</dbReference>
<dbReference type="SUPFAM" id="SSF54211">
    <property type="entry name" value="Ribosomal protein S5 domain 2-like"/>
    <property type="match status" value="2"/>
</dbReference>
<dbReference type="PROSITE" id="PS50084">
    <property type="entry name" value="KH_TYPE_1"/>
    <property type="match status" value="1"/>
</dbReference>
<dbReference type="PROSITE" id="PS50126">
    <property type="entry name" value="S1"/>
    <property type="match status" value="1"/>
</dbReference>